<sequence length="263" mass="29251">MRFSSWALVSLVAGVYMSSECFHTEIIGGREVQPHSRPFMASIQYRSKHICGGVLIHPQWVLTAAHCYSWFPRGHSPTVVLGAHSLSKNEPMKQTFEIKKFIPFSRLQSGSASHDIMLIKLRTAAELNKNVQLLHLGSKNYLRDGTKCQVTGWGTTKPDLLTASDTLREVTVTIISRKRCNSQSYYNHKPVITKDMICAGDARGQKDSCKGDSGGPLICKGIFHALVSQGYKCGIAKKPGIYTLLTKKYQTWIKSKLAPSRAH</sequence>
<evidence type="ECO:0000250" key="1"/>
<evidence type="ECO:0000255" key="2"/>
<evidence type="ECO:0000255" key="3">
    <source>
        <dbReference type="PROSITE-ProRule" id="PRU00274"/>
    </source>
</evidence>
<protein>
    <recommendedName>
        <fullName>Granzyme K</fullName>
        <ecNumber>3.4.21.-</ecNumber>
    </recommendedName>
</protein>
<keyword id="KW-1015">Disulfide bond</keyword>
<keyword id="KW-0378">Hydrolase</keyword>
<keyword id="KW-0645">Protease</keyword>
<keyword id="KW-1185">Reference proteome</keyword>
<keyword id="KW-0720">Serine protease</keyword>
<keyword id="KW-0732">Signal</keyword>
<keyword id="KW-0865">Zymogen</keyword>
<feature type="signal peptide" evidence="2">
    <location>
        <begin position="1"/>
        <end position="21"/>
    </location>
</feature>
<feature type="propeptide" id="PRO_0000027417" description="Activation peptide">
    <location>
        <begin position="22"/>
        <end position="25"/>
    </location>
</feature>
<feature type="chain" id="PRO_0000027418" description="Granzyme K">
    <location>
        <begin position="26"/>
        <end position="263"/>
    </location>
</feature>
<feature type="domain" description="Peptidase S1" evidence="3">
    <location>
        <begin position="26"/>
        <end position="258"/>
    </location>
</feature>
<feature type="active site" description="Charge relay system" evidence="1">
    <location>
        <position position="66"/>
    </location>
</feature>
<feature type="active site" description="Charge relay system" evidence="1">
    <location>
        <position position="115"/>
    </location>
</feature>
<feature type="active site" description="Charge relay system" evidence="1">
    <location>
        <position position="213"/>
    </location>
</feature>
<feature type="disulfide bond" evidence="3">
    <location>
        <begin position="51"/>
        <end position="67"/>
    </location>
</feature>
<feature type="disulfide bond" evidence="3">
    <location>
        <begin position="148"/>
        <end position="219"/>
    </location>
</feature>
<feature type="disulfide bond" evidence="3">
    <location>
        <begin position="180"/>
        <end position="198"/>
    </location>
</feature>
<feature type="disulfide bond" evidence="3">
    <location>
        <begin position="209"/>
        <end position="233"/>
    </location>
</feature>
<organism>
    <name type="scientific">Mus musculus</name>
    <name type="common">Mouse</name>
    <dbReference type="NCBI Taxonomy" id="10090"/>
    <lineage>
        <taxon>Eukaryota</taxon>
        <taxon>Metazoa</taxon>
        <taxon>Chordata</taxon>
        <taxon>Craniata</taxon>
        <taxon>Vertebrata</taxon>
        <taxon>Euteleostomi</taxon>
        <taxon>Mammalia</taxon>
        <taxon>Eutheria</taxon>
        <taxon>Euarchontoglires</taxon>
        <taxon>Glires</taxon>
        <taxon>Rodentia</taxon>
        <taxon>Myomorpha</taxon>
        <taxon>Muroidea</taxon>
        <taxon>Muridae</taxon>
        <taxon>Murinae</taxon>
        <taxon>Mus</taxon>
        <taxon>Mus</taxon>
    </lineage>
</organism>
<reference key="1">
    <citation type="journal article" date="1997" name="J. Biol. Chem.">
        <title>Residual cytotoxicity and granzyme K expression in granzyme A-deficient cytotoxic lymphocytes.</title>
        <authorList>
            <person name="Shresta S."/>
            <person name="Goda P."/>
            <person name="Wesselschmidt R."/>
            <person name="Ley T.J."/>
        </authorList>
    </citation>
    <scope>NUCLEOTIDE SEQUENCE [GENOMIC DNA]</scope>
    <source>
        <strain>129/SvJ</strain>
    </source>
</reference>
<name>GRAK_MOUSE</name>
<proteinExistence type="inferred from homology"/>
<dbReference type="EC" id="3.4.21.-"/>
<dbReference type="EMBL" id="AF011446">
    <property type="protein sequence ID" value="AAC17930.1"/>
    <property type="molecule type" value="Genomic_DNA"/>
</dbReference>
<dbReference type="CCDS" id="CCDS26783.1"/>
<dbReference type="RefSeq" id="NP_032222.1">
    <property type="nucleotide sequence ID" value="NM_008196.2"/>
</dbReference>
<dbReference type="SMR" id="O35205"/>
<dbReference type="FunCoup" id="O35205">
    <property type="interactions" value="76"/>
</dbReference>
<dbReference type="STRING" id="10090.ENSMUSP00000044512"/>
<dbReference type="MEROPS" id="S01.146"/>
<dbReference type="GlyGen" id="O35205">
    <property type="glycosylation" value="2 sites, 1 O-linked glycan (1 site)"/>
</dbReference>
<dbReference type="iPTMnet" id="O35205"/>
<dbReference type="PhosphoSitePlus" id="O35205"/>
<dbReference type="PaxDb" id="10090-ENSMUSP00000044512"/>
<dbReference type="ProteomicsDB" id="271157"/>
<dbReference type="Antibodypedia" id="11044">
    <property type="antibodies" value="309 antibodies from 33 providers"/>
</dbReference>
<dbReference type="DNASU" id="14945"/>
<dbReference type="Ensembl" id="ENSMUST00000038212.14">
    <property type="protein sequence ID" value="ENSMUSP00000044512.8"/>
    <property type="gene ID" value="ENSMUSG00000042385.15"/>
</dbReference>
<dbReference type="GeneID" id="14945"/>
<dbReference type="KEGG" id="mmu:14945"/>
<dbReference type="UCSC" id="uc007rxd.1">
    <property type="organism name" value="mouse"/>
</dbReference>
<dbReference type="AGR" id="MGI:1298232"/>
<dbReference type="CTD" id="3003"/>
<dbReference type="MGI" id="MGI:1298232">
    <property type="gene designation" value="Gzmk"/>
</dbReference>
<dbReference type="VEuPathDB" id="HostDB:ENSMUSG00000042385"/>
<dbReference type="eggNOG" id="KOG3627">
    <property type="taxonomic scope" value="Eukaryota"/>
</dbReference>
<dbReference type="GeneTree" id="ENSGT00940000161886"/>
<dbReference type="HOGENOM" id="CLU_006842_1_0_1"/>
<dbReference type="InParanoid" id="O35205"/>
<dbReference type="OMA" id="KYQAWIK"/>
<dbReference type="OrthoDB" id="10059102at2759"/>
<dbReference type="PhylomeDB" id="O35205"/>
<dbReference type="TreeFam" id="TF333630"/>
<dbReference type="BRENDA" id="3.4.21.B4">
    <property type="organism ID" value="3474"/>
</dbReference>
<dbReference type="BioGRID-ORCS" id="14945">
    <property type="hits" value="6 hits in 77 CRISPR screens"/>
</dbReference>
<dbReference type="PRO" id="PR:O35205"/>
<dbReference type="Proteomes" id="UP000000589">
    <property type="component" value="Chromosome 13"/>
</dbReference>
<dbReference type="RNAct" id="O35205">
    <property type="molecule type" value="protein"/>
</dbReference>
<dbReference type="Bgee" id="ENSMUSG00000042385">
    <property type="expression patterns" value="Expressed in presomitic mesoderm and 39 other cell types or tissues"/>
</dbReference>
<dbReference type="ExpressionAtlas" id="O35205">
    <property type="expression patterns" value="baseline and differential"/>
</dbReference>
<dbReference type="GO" id="GO:0004252">
    <property type="term" value="F:serine-type endopeptidase activity"/>
    <property type="evidence" value="ECO:0007669"/>
    <property type="project" value="Ensembl"/>
</dbReference>
<dbReference type="GO" id="GO:0006508">
    <property type="term" value="P:proteolysis"/>
    <property type="evidence" value="ECO:0007669"/>
    <property type="project" value="UniProtKB-KW"/>
</dbReference>
<dbReference type="CDD" id="cd00190">
    <property type="entry name" value="Tryp_SPc"/>
    <property type="match status" value="1"/>
</dbReference>
<dbReference type="FunFam" id="2.40.10.10:FF:000003">
    <property type="entry name" value="Transmembrane serine protease 3"/>
    <property type="match status" value="1"/>
</dbReference>
<dbReference type="Gene3D" id="2.40.10.10">
    <property type="entry name" value="Trypsin-like serine proteases"/>
    <property type="match status" value="2"/>
</dbReference>
<dbReference type="InterPro" id="IPR009003">
    <property type="entry name" value="Peptidase_S1_PA"/>
</dbReference>
<dbReference type="InterPro" id="IPR043504">
    <property type="entry name" value="Peptidase_S1_PA_chymotrypsin"/>
</dbReference>
<dbReference type="InterPro" id="IPR001314">
    <property type="entry name" value="Peptidase_S1A"/>
</dbReference>
<dbReference type="InterPro" id="IPR001254">
    <property type="entry name" value="Trypsin_dom"/>
</dbReference>
<dbReference type="InterPro" id="IPR018114">
    <property type="entry name" value="TRYPSIN_HIS"/>
</dbReference>
<dbReference type="InterPro" id="IPR033116">
    <property type="entry name" value="TRYPSIN_SER"/>
</dbReference>
<dbReference type="PANTHER" id="PTHR24271:SF52">
    <property type="entry name" value="GRANZYME K"/>
    <property type="match status" value="1"/>
</dbReference>
<dbReference type="PANTHER" id="PTHR24271">
    <property type="entry name" value="KALLIKREIN-RELATED"/>
    <property type="match status" value="1"/>
</dbReference>
<dbReference type="Pfam" id="PF00089">
    <property type="entry name" value="Trypsin"/>
    <property type="match status" value="1"/>
</dbReference>
<dbReference type="PRINTS" id="PR00722">
    <property type="entry name" value="CHYMOTRYPSIN"/>
</dbReference>
<dbReference type="SMART" id="SM00020">
    <property type="entry name" value="Tryp_SPc"/>
    <property type="match status" value="1"/>
</dbReference>
<dbReference type="SUPFAM" id="SSF50494">
    <property type="entry name" value="Trypsin-like serine proteases"/>
    <property type="match status" value="1"/>
</dbReference>
<dbReference type="PROSITE" id="PS50240">
    <property type="entry name" value="TRYPSIN_DOM"/>
    <property type="match status" value="1"/>
</dbReference>
<dbReference type="PROSITE" id="PS00134">
    <property type="entry name" value="TRYPSIN_HIS"/>
    <property type="match status" value="1"/>
</dbReference>
<dbReference type="PROSITE" id="PS00135">
    <property type="entry name" value="TRYPSIN_SER"/>
    <property type="match status" value="1"/>
</dbReference>
<gene>
    <name type="primary">Gzmk</name>
</gene>
<accession>O35205</accession>
<comment type="subcellular location">
    <subcellularLocation>
        <location>Cytoplasmic granule</location>
    </subcellularLocation>
</comment>
<comment type="similarity">
    <text evidence="3">Belongs to the peptidase S1 family. Granzyme subfamily.</text>
</comment>